<sequence>MAVSYNYGTGRRKTAVARVFIKPGSGNIVVNGKPVDEFFSRETGRMIVRQPLVLTENDSRFDIMVNVTGGGESGQAGAVRHGITRALIEYDAELKPVLRKAGFVTRDAREVERKKVGFRKARRRKQFSKR</sequence>
<keyword id="KW-1185">Reference proteome</keyword>
<keyword id="KW-0687">Ribonucleoprotein</keyword>
<keyword id="KW-0689">Ribosomal protein</keyword>
<dbReference type="EMBL" id="CR555306">
    <property type="protein sequence ID" value="CAI06623.1"/>
    <property type="molecule type" value="Genomic_DNA"/>
</dbReference>
<dbReference type="RefSeq" id="WP_011236353.1">
    <property type="nucleotide sequence ID" value="NC_006513.1"/>
</dbReference>
<dbReference type="SMR" id="Q5P7T8"/>
<dbReference type="STRING" id="76114.ebA937"/>
<dbReference type="KEGG" id="eba:ebA937"/>
<dbReference type="eggNOG" id="COG0103">
    <property type="taxonomic scope" value="Bacteria"/>
</dbReference>
<dbReference type="HOGENOM" id="CLU_046483_2_1_4"/>
<dbReference type="OrthoDB" id="9803965at2"/>
<dbReference type="Proteomes" id="UP000006552">
    <property type="component" value="Chromosome"/>
</dbReference>
<dbReference type="GO" id="GO:0022627">
    <property type="term" value="C:cytosolic small ribosomal subunit"/>
    <property type="evidence" value="ECO:0007669"/>
    <property type="project" value="TreeGrafter"/>
</dbReference>
<dbReference type="GO" id="GO:0003723">
    <property type="term" value="F:RNA binding"/>
    <property type="evidence" value="ECO:0007669"/>
    <property type="project" value="TreeGrafter"/>
</dbReference>
<dbReference type="GO" id="GO:0003735">
    <property type="term" value="F:structural constituent of ribosome"/>
    <property type="evidence" value="ECO:0007669"/>
    <property type="project" value="InterPro"/>
</dbReference>
<dbReference type="GO" id="GO:0006412">
    <property type="term" value="P:translation"/>
    <property type="evidence" value="ECO:0007669"/>
    <property type="project" value="UniProtKB-UniRule"/>
</dbReference>
<dbReference type="FunFam" id="3.30.230.10:FF:000001">
    <property type="entry name" value="30S ribosomal protein S9"/>
    <property type="match status" value="1"/>
</dbReference>
<dbReference type="Gene3D" id="3.30.230.10">
    <property type="match status" value="1"/>
</dbReference>
<dbReference type="HAMAP" id="MF_00532_B">
    <property type="entry name" value="Ribosomal_uS9_B"/>
    <property type="match status" value="1"/>
</dbReference>
<dbReference type="InterPro" id="IPR020568">
    <property type="entry name" value="Ribosomal_Su5_D2-typ_SF"/>
</dbReference>
<dbReference type="InterPro" id="IPR000754">
    <property type="entry name" value="Ribosomal_uS9"/>
</dbReference>
<dbReference type="InterPro" id="IPR023035">
    <property type="entry name" value="Ribosomal_uS9_bac/plastid"/>
</dbReference>
<dbReference type="InterPro" id="IPR020574">
    <property type="entry name" value="Ribosomal_uS9_CS"/>
</dbReference>
<dbReference type="InterPro" id="IPR014721">
    <property type="entry name" value="Ribsml_uS5_D2-typ_fold_subgr"/>
</dbReference>
<dbReference type="NCBIfam" id="NF001099">
    <property type="entry name" value="PRK00132.1"/>
    <property type="match status" value="1"/>
</dbReference>
<dbReference type="PANTHER" id="PTHR21569">
    <property type="entry name" value="RIBOSOMAL PROTEIN S9"/>
    <property type="match status" value="1"/>
</dbReference>
<dbReference type="PANTHER" id="PTHR21569:SF1">
    <property type="entry name" value="SMALL RIBOSOMAL SUBUNIT PROTEIN US9M"/>
    <property type="match status" value="1"/>
</dbReference>
<dbReference type="Pfam" id="PF00380">
    <property type="entry name" value="Ribosomal_S9"/>
    <property type="match status" value="1"/>
</dbReference>
<dbReference type="SUPFAM" id="SSF54211">
    <property type="entry name" value="Ribosomal protein S5 domain 2-like"/>
    <property type="match status" value="1"/>
</dbReference>
<dbReference type="PROSITE" id="PS00360">
    <property type="entry name" value="RIBOSOMAL_S9"/>
    <property type="match status" value="1"/>
</dbReference>
<reference key="1">
    <citation type="journal article" date="2005" name="Arch. Microbiol.">
        <title>The genome sequence of an anaerobic aromatic-degrading denitrifying bacterium, strain EbN1.</title>
        <authorList>
            <person name="Rabus R."/>
            <person name="Kube M."/>
            <person name="Heider J."/>
            <person name="Beck A."/>
            <person name="Heitmann K."/>
            <person name="Widdel F."/>
            <person name="Reinhardt R."/>
        </authorList>
    </citation>
    <scope>NUCLEOTIDE SEQUENCE [LARGE SCALE GENOMIC DNA]</scope>
    <source>
        <strain>DSM 19018 / LMG 30748 / EbN1</strain>
    </source>
</reference>
<evidence type="ECO:0000255" key="1">
    <source>
        <dbReference type="HAMAP-Rule" id="MF_00532"/>
    </source>
</evidence>
<evidence type="ECO:0000305" key="2"/>
<proteinExistence type="inferred from homology"/>
<organism>
    <name type="scientific">Aromatoleum aromaticum (strain DSM 19018 / LMG 30748 / EbN1)</name>
    <name type="common">Azoarcus sp. (strain EbN1)</name>
    <dbReference type="NCBI Taxonomy" id="76114"/>
    <lineage>
        <taxon>Bacteria</taxon>
        <taxon>Pseudomonadati</taxon>
        <taxon>Pseudomonadota</taxon>
        <taxon>Betaproteobacteria</taxon>
        <taxon>Rhodocyclales</taxon>
        <taxon>Rhodocyclaceae</taxon>
        <taxon>Aromatoleum</taxon>
    </lineage>
</organism>
<comment type="similarity">
    <text evidence="1">Belongs to the universal ribosomal protein uS9 family.</text>
</comment>
<gene>
    <name evidence="1" type="primary">rpsI</name>
    <name type="ordered locus">AZOSEA05010</name>
    <name type="ORF">ebA937</name>
</gene>
<feature type="chain" id="PRO_1000051159" description="Small ribosomal subunit protein uS9">
    <location>
        <begin position="1"/>
        <end position="130"/>
    </location>
</feature>
<name>RS9_AROAE</name>
<accession>Q5P7T8</accession>
<protein>
    <recommendedName>
        <fullName evidence="1">Small ribosomal subunit protein uS9</fullName>
    </recommendedName>
    <alternativeName>
        <fullName evidence="2">30S ribosomal protein S9</fullName>
    </alternativeName>
</protein>